<evidence type="ECO:0000250" key="1"/>
<gene>
    <name type="primary">gerPD</name>
    <name type="ordered locus">BC_1142</name>
</gene>
<sequence length="64" mass="6781">MNLNVVNRELKVGQIKMNGVSSSALFLIGDANLLILSSILDTPFETVTEGPFVPLVTDVPPTPG</sequence>
<feature type="chain" id="PRO_0000087472" description="Probable spore germination protein GerPD">
    <location>
        <begin position="1"/>
        <end position="64"/>
    </location>
</feature>
<reference key="1">
    <citation type="journal article" date="2003" name="Nature">
        <title>Genome sequence of Bacillus cereus and comparative analysis with Bacillus anthracis.</title>
        <authorList>
            <person name="Ivanova N."/>
            <person name="Sorokin A."/>
            <person name="Anderson I."/>
            <person name="Galleron N."/>
            <person name="Candelon B."/>
            <person name="Kapatral V."/>
            <person name="Bhattacharyya A."/>
            <person name="Reznik G."/>
            <person name="Mikhailova N."/>
            <person name="Lapidus A."/>
            <person name="Chu L."/>
            <person name="Mazur M."/>
            <person name="Goltsman E."/>
            <person name="Larsen N."/>
            <person name="D'Souza M."/>
            <person name="Walunas T."/>
            <person name="Grechkin Y."/>
            <person name="Pusch G."/>
            <person name="Haselkorn R."/>
            <person name="Fonstein M."/>
            <person name="Ehrlich S.D."/>
            <person name="Overbeek R."/>
            <person name="Kyrpides N.C."/>
        </authorList>
    </citation>
    <scope>NUCLEOTIDE SEQUENCE [LARGE SCALE GENOMIC DNA]</scope>
    <source>
        <strain>ATCC 14579 / DSM 31 / CCUG 7414 / JCM 2152 / NBRC 15305 / NCIMB 9373 / NCTC 2599 / NRRL B-3711</strain>
    </source>
</reference>
<proteinExistence type="inferred from homology"/>
<organism>
    <name type="scientific">Bacillus cereus (strain ATCC 14579 / DSM 31 / CCUG 7414 / JCM 2152 / NBRC 15305 / NCIMB 9373 / NCTC 2599 / NRRL B-3711)</name>
    <dbReference type="NCBI Taxonomy" id="226900"/>
    <lineage>
        <taxon>Bacteria</taxon>
        <taxon>Bacillati</taxon>
        <taxon>Bacillota</taxon>
        <taxon>Bacilli</taxon>
        <taxon>Bacillales</taxon>
        <taxon>Bacillaceae</taxon>
        <taxon>Bacillus</taxon>
        <taxon>Bacillus cereus group</taxon>
    </lineage>
</organism>
<comment type="function">
    <text evidence="1">Required for the formation of functionally normal spores. Could be involved in the establishment of normal spore coat structure and/or permeability, which allows the access of germinants to their receptor (By similarity).</text>
</comment>
<accession>P0A3T8</accession>
<accession>O68686</accession>
<keyword id="KW-0309">Germination</keyword>
<keyword id="KW-1185">Reference proteome</keyword>
<keyword id="KW-0749">Sporulation</keyword>
<protein>
    <recommendedName>
        <fullName>Probable spore germination protein GerPD</fullName>
    </recommendedName>
</protein>
<name>GERPD_BACCR</name>
<dbReference type="EMBL" id="AE016877">
    <property type="protein sequence ID" value="AAP08129.1"/>
    <property type="molecule type" value="Genomic_DNA"/>
</dbReference>
<dbReference type="RefSeq" id="NP_830928.1">
    <property type="nucleotide sequence ID" value="NC_004722.1"/>
</dbReference>
<dbReference type="RefSeq" id="WP_001052807.1">
    <property type="nucleotide sequence ID" value="NZ_CP138336.1"/>
</dbReference>
<dbReference type="STRING" id="226900.BC_1142"/>
<dbReference type="GeneID" id="92800387"/>
<dbReference type="KEGG" id="bce:BC1142"/>
<dbReference type="PATRIC" id="fig|226900.8.peg.1105"/>
<dbReference type="HOGENOM" id="CLU_206377_0_0_9"/>
<dbReference type="OrthoDB" id="2455313at2"/>
<dbReference type="Proteomes" id="UP000001417">
    <property type="component" value="Chromosome"/>
</dbReference>
<dbReference type="GO" id="GO:0030435">
    <property type="term" value="P:sporulation resulting in formation of a cellular spore"/>
    <property type="evidence" value="ECO:0007669"/>
    <property type="project" value="UniProtKB-KW"/>
</dbReference>
<dbReference type="InterPro" id="IPR017257">
    <property type="entry name" value="Spore_germination_GerPD_prd"/>
</dbReference>
<dbReference type="PIRSF" id="PIRSF037666">
    <property type="entry name" value="GerPD_prd"/>
    <property type="match status" value="1"/>
</dbReference>